<proteinExistence type="inferred from homology"/>
<name>UXAC_SALHS</name>
<evidence type="ECO:0000255" key="1">
    <source>
        <dbReference type="HAMAP-Rule" id="MF_00675"/>
    </source>
</evidence>
<protein>
    <recommendedName>
        <fullName evidence="1">Uronate isomerase</fullName>
        <ecNumber evidence="1">5.3.1.12</ecNumber>
    </recommendedName>
    <alternativeName>
        <fullName evidence="1">Glucuronate isomerase</fullName>
    </alternativeName>
    <alternativeName>
        <fullName evidence="1">Uronic isomerase</fullName>
    </alternativeName>
</protein>
<sequence>MATFMTEDFLLKNDIARTLYHKYAAPMPIYDFHCHLSPQEIADDRRFDNLGQIWLEGDHYKWRALRSAGVDESLITGKETSDYEKYMAWANTVPKTLGNPLYHWTHLELRRPFGITGTLFGPDTAESIWTQCNEKLATPAFSARGIMQQMNVRMVGTTDDPIDSLEYHRQIAADDSIDIEVAPSWRPDKVFKIELDGFVDYLGKLEAAADVSITRFDDLRQALTRRLDHFAACGCLASDHGIETLRFAPVPDDAQLDAILGKRLAGETLSELEIAQFTTAVLVWLGRQYAARGWVMQLHIGAIRNNNTRMFRLLGPDTGFDSIGDNNISWALSRLLDSMDVTNELPKTILYCLNPRDNEVLATMIGNFQGPGIAGKVQFGSGWWFNDQKDGMLRQLEQLSQMGLLSQFVGMLTDSRSFLSYTRHEYFRRILCNLLGQWAQDGEIPDDEAMLSRMVQDICFNNAQRYFTIK</sequence>
<keyword id="KW-0413">Isomerase</keyword>
<gene>
    <name evidence="1" type="primary">uxaC</name>
    <name type="ordered locus">SeHA_C3383</name>
</gene>
<comment type="catalytic activity">
    <reaction evidence="1">
        <text>D-glucuronate = D-fructuronate</text>
        <dbReference type="Rhea" id="RHEA:13049"/>
        <dbReference type="ChEBI" id="CHEBI:58720"/>
        <dbReference type="ChEBI" id="CHEBI:59863"/>
        <dbReference type="EC" id="5.3.1.12"/>
    </reaction>
</comment>
<comment type="catalytic activity">
    <reaction evidence="1">
        <text>aldehydo-D-galacturonate = keto-D-tagaturonate</text>
        <dbReference type="Rhea" id="RHEA:27702"/>
        <dbReference type="ChEBI" id="CHEBI:12952"/>
        <dbReference type="ChEBI" id="CHEBI:17886"/>
        <dbReference type="EC" id="5.3.1.12"/>
    </reaction>
</comment>
<comment type="pathway">
    <text evidence="1">Carbohydrate metabolism; pentose and glucuronate interconversion.</text>
</comment>
<comment type="similarity">
    <text evidence="1">Belongs to the metallo-dependent hydrolases superfamily. Uronate isomerase family.</text>
</comment>
<accession>B4THM8</accession>
<reference key="1">
    <citation type="journal article" date="2011" name="J. Bacteriol.">
        <title>Comparative genomics of 28 Salmonella enterica isolates: evidence for CRISPR-mediated adaptive sublineage evolution.</title>
        <authorList>
            <person name="Fricke W.F."/>
            <person name="Mammel M.K."/>
            <person name="McDermott P.F."/>
            <person name="Tartera C."/>
            <person name="White D.G."/>
            <person name="Leclerc J.E."/>
            <person name="Ravel J."/>
            <person name="Cebula T.A."/>
        </authorList>
    </citation>
    <scope>NUCLEOTIDE SEQUENCE [LARGE SCALE GENOMIC DNA]</scope>
    <source>
        <strain>SL476</strain>
    </source>
</reference>
<feature type="chain" id="PRO_1000131604" description="Uronate isomerase">
    <location>
        <begin position="1"/>
        <end position="470"/>
    </location>
</feature>
<dbReference type="EC" id="5.3.1.12" evidence="1"/>
<dbReference type="EMBL" id="CP001120">
    <property type="protein sequence ID" value="ACF67389.1"/>
    <property type="molecule type" value="Genomic_DNA"/>
</dbReference>
<dbReference type="RefSeq" id="WP_000190177.1">
    <property type="nucleotide sequence ID" value="NC_011083.1"/>
</dbReference>
<dbReference type="SMR" id="B4THM8"/>
<dbReference type="KEGG" id="seh:SeHA_C3383"/>
<dbReference type="HOGENOM" id="CLU_044465_1_0_6"/>
<dbReference type="UniPathway" id="UPA00246"/>
<dbReference type="Proteomes" id="UP000001866">
    <property type="component" value="Chromosome"/>
</dbReference>
<dbReference type="GO" id="GO:0008880">
    <property type="term" value="F:glucuronate isomerase activity"/>
    <property type="evidence" value="ECO:0007669"/>
    <property type="project" value="UniProtKB-UniRule"/>
</dbReference>
<dbReference type="GO" id="GO:0019698">
    <property type="term" value="P:D-galacturonate catabolic process"/>
    <property type="evidence" value="ECO:0007669"/>
    <property type="project" value="TreeGrafter"/>
</dbReference>
<dbReference type="GO" id="GO:0042840">
    <property type="term" value="P:D-glucuronate catabolic process"/>
    <property type="evidence" value="ECO:0007669"/>
    <property type="project" value="TreeGrafter"/>
</dbReference>
<dbReference type="Gene3D" id="3.20.20.140">
    <property type="entry name" value="Metal-dependent hydrolases"/>
    <property type="match status" value="1"/>
</dbReference>
<dbReference type="Gene3D" id="1.10.2020.10">
    <property type="entry name" value="uronate isomerase, domain 2, chain A"/>
    <property type="match status" value="1"/>
</dbReference>
<dbReference type="HAMAP" id="MF_00675">
    <property type="entry name" value="UxaC"/>
    <property type="match status" value="1"/>
</dbReference>
<dbReference type="InterPro" id="IPR032466">
    <property type="entry name" value="Metal_Hydrolase"/>
</dbReference>
<dbReference type="InterPro" id="IPR003766">
    <property type="entry name" value="Uronate_isomerase"/>
</dbReference>
<dbReference type="NCBIfam" id="NF002794">
    <property type="entry name" value="PRK02925.1"/>
    <property type="match status" value="1"/>
</dbReference>
<dbReference type="PANTHER" id="PTHR30068">
    <property type="entry name" value="URONATE ISOMERASE"/>
    <property type="match status" value="1"/>
</dbReference>
<dbReference type="PANTHER" id="PTHR30068:SF4">
    <property type="entry name" value="URONATE ISOMERASE"/>
    <property type="match status" value="1"/>
</dbReference>
<dbReference type="Pfam" id="PF02614">
    <property type="entry name" value="UxaC"/>
    <property type="match status" value="1"/>
</dbReference>
<dbReference type="SUPFAM" id="SSF51556">
    <property type="entry name" value="Metallo-dependent hydrolases"/>
    <property type="match status" value="1"/>
</dbReference>
<organism>
    <name type="scientific">Salmonella heidelberg (strain SL476)</name>
    <dbReference type="NCBI Taxonomy" id="454169"/>
    <lineage>
        <taxon>Bacteria</taxon>
        <taxon>Pseudomonadati</taxon>
        <taxon>Pseudomonadota</taxon>
        <taxon>Gammaproteobacteria</taxon>
        <taxon>Enterobacterales</taxon>
        <taxon>Enterobacteriaceae</taxon>
        <taxon>Salmonella</taxon>
    </lineage>
</organism>